<protein>
    <recommendedName>
        <fullName evidence="1">ATP synthase subunit beta</fullName>
        <ecNumber evidence="1">7.1.2.2</ecNumber>
    </recommendedName>
    <alternativeName>
        <fullName evidence="1">ATP synthase F1 sector subunit beta</fullName>
    </alternativeName>
    <alternativeName>
        <fullName evidence="1">F-ATPase subunit beta</fullName>
    </alternativeName>
</protein>
<feature type="chain" id="PRO_1000055130" description="ATP synthase subunit beta">
    <location>
        <begin position="1"/>
        <end position="467"/>
    </location>
</feature>
<feature type="binding site" evidence="1">
    <location>
        <begin position="154"/>
        <end position="161"/>
    </location>
    <ligand>
        <name>ATP</name>
        <dbReference type="ChEBI" id="CHEBI:30616"/>
    </ligand>
</feature>
<proteinExistence type="inferred from homology"/>
<gene>
    <name evidence="1" type="primary">atpD</name>
    <name type="ordered locus">LBJ_1752</name>
</gene>
<accession>Q04S18</accession>
<keyword id="KW-0066">ATP synthesis</keyword>
<keyword id="KW-0067">ATP-binding</keyword>
<keyword id="KW-0997">Cell inner membrane</keyword>
<keyword id="KW-1003">Cell membrane</keyword>
<keyword id="KW-0139">CF(1)</keyword>
<keyword id="KW-0375">Hydrogen ion transport</keyword>
<keyword id="KW-0406">Ion transport</keyword>
<keyword id="KW-0472">Membrane</keyword>
<keyword id="KW-0547">Nucleotide-binding</keyword>
<keyword id="KW-1278">Translocase</keyword>
<keyword id="KW-0813">Transport</keyword>
<evidence type="ECO:0000255" key="1">
    <source>
        <dbReference type="HAMAP-Rule" id="MF_01347"/>
    </source>
</evidence>
<comment type="function">
    <text evidence="1">Produces ATP from ADP in the presence of a proton gradient across the membrane. The catalytic sites are hosted primarily by the beta subunits.</text>
</comment>
<comment type="catalytic activity">
    <reaction evidence="1">
        <text>ATP + H2O + 4 H(+)(in) = ADP + phosphate + 5 H(+)(out)</text>
        <dbReference type="Rhea" id="RHEA:57720"/>
        <dbReference type="ChEBI" id="CHEBI:15377"/>
        <dbReference type="ChEBI" id="CHEBI:15378"/>
        <dbReference type="ChEBI" id="CHEBI:30616"/>
        <dbReference type="ChEBI" id="CHEBI:43474"/>
        <dbReference type="ChEBI" id="CHEBI:456216"/>
        <dbReference type="EC" id="7.1.2.2"/>
    </reaction>
</comment>
<comment type="subunit">
    <text evidence="1">F-type ATPases have 2 components, CF(1) - the catalytic core - and CF(0) - the membrane proton channel. CF(1) has five subunits: alpha(3), beta(3), gamma(1), delta(1), epsilon(1). CF(0) has three main subunits: a(1), b(2) and c(9-12). The alpha and beta chains form an alternating ring which encloses part of the gamma chain. CF(1) is attached to CF(0) by a central stalk formed by the gamma and epsilon chains, while a peripheral stalk is formed by the delta and b chains.</text>
</comment>
<comment type="subcellular location">
    <subcellularLocation>
        <location evidence="1">Cell inner membrane</location>
        <topology evidence="1">Peripheral membrane protein</topology>
    </subcellularLocation>
</comment>
<comment type="similarity">
    <text evidence="1">Belongs to the ATPase alpha/beta chains family.</text>
</comment>
<sequence length="467" mass="50589">MNKGKIKQIIGSVLDIEFENGELPEIYNALEIEATVSGKREILIAEVQTHIGGKAIRAIALSSTDGLIRGQEVTNTGKPISVPVGDATLGRIFNVLGKTIDEGPAITVKETRPIHRPAPAFDELTSKTEVFETGIKVIDLLAPYIKGGKTGLFGGAGVGKTVLIQELINNIAKQHGGFSVFAGVGERTREGNDLWREMKESGVIDKTVLCYGQMNEPPGARLRVALSALTMAEHFRDSIGTDVLLFVDNIFRFSQAGSEVSALLGRMPSAVGYQPTLSTEMGALQERITSTKKGSITSVQAIYVPADDLTDPAPANAFAHLDATTVLSRAISDKGIYPAVDPLDSTSRVMNAQVLGEEHYTVAREVQRILQRYKDLQDIIAILGMDELSEDDKVLVARARKIEKFLSQPFHVAEVFTGAPGKYVKLADTVRSFKEVISGNYDHLPEQAFYMVGSIDDAIEKAKGYKG</sequence>
<organism>
    <name type="scientific">Leptospira borgpetersenii serovar Hardjo-bovis (strain JB197)</name>
    <dbReference type="NCBI Taxonomy" id="355277"/>
    <lineage>
        <taxon>Bacteria</taxon>
        <taxon>Pseudomonadati</taxon>
        <taxon>Spirochaetota</taxon>
        <taxon>Spirochaetia</taxon>
        <taxon>Leptospirales</taxon>
        <taxon>Leptospiraceae</taxon>
        <taxon>Leptospira</taxon>
    </lineage>
</organism>
<reference key="1">
    <citation type="journal article" date="2006" name="Proc. Natl. Acad. Sci. U.S.A.">
        <title>Genome reduction in Leptospira borgpetersenii reflects limited transmission potential.</title>
        <authorList>
            <person name="Bulach D.M."/>
            <person name="Zuerner R.L."/>
            <person name="Wilson P."/>
            <person name="Seemann T."/>
            <person name="McGrath A."/>
            <person name="Cullen P.A."/>
            <person name="Davis J."/>
            <person name="Johnson M."/>
            <person name="Kuczek E."/>
            <person name="Alt D.P."/>
            <person name="Peterson-Burch B."/>
            <person name="Coppel R.L."/>
            <person name="Rood J.I."/>
            <person name="Davies J.K."/>
            <person name="Adler B."/>
        </authorList>
    </citation>
    <scope>NUCLEOTIDE SEQUENCE [LARGE SCALE GENOMIC DNA]</scope>
    <source>
        <strain>JB197</strain>
    </source>
</reference>
<name>ATPB_LEPBJ</name>
<dbReference type="EC" id="7.1.2.2" evidence="1"/>
<dbReference type="EMBL" id="CP000350">
    <property type="protein sequence ID" value="ABJ76302.1"/>
    <property type="molecule type" value="Genomic_DNA"/>
</dbReference>
<dbReference type="RefSeq" id="WP_011670483.1">
    <property type="nucleotide sequence ID" value="NC_008510.1"/>
</dbReference>
<dbReference type="SMR" id="Q04S18"/>
<dbReference type="KEGG" id="lbj:LBJ_1752"/>
<dbReference type="HOGENOM" id="CLU_022398_0_2_12"/>
<dbReference type="Proteomes" id="UP000000656">
    <property type="component" value="Chromosome 1"/>
</dbReference>
<dbReference type="GO" id="GO:0005886">
    <property type="term" value="C:plasma membrane"/>
    <property type="evidence" value="ECO:0007669"/>
    <property type="project" value="UniProtKB-SubCell"/>
</dbReference>
<dbReference type="GO" id="GO:0045259">
    <property type="term" value="C:proton-transporting ATP synthase complex"/>
    <property type="evidence" value="ECO:0007669"/>
    <property type="project" value="UniProtKB-KW"/>
</dbReference>
<dbReference type="GO" id="GO:0005524">
    <property type="term" value="F:ATP binding"/>
    <property type="evidence" value="ECO:0007669"/>
    <property type="project" value="UniProtKB-UniRule"/>
</dbReference>
<dbReference type="GO" id="GO:0016887">
    <property type="term" value="F:ATP hydrolysis activity"/>
    <property type="evidence" value="ECO:0007669"/>
    <property type="project" value="InterPro"/>
</dbReference>
<dbReference type="GO" id="GO:0046933">
    <property type="term" value="F:proton-transporting ATP synthase activity, rotational mechanism"/>
    <property type="evidence" value="ECO:0007669"/>
    <property type="project" value="UniProtKB-UniRule"/>
</dbReference>
<dbReference type="CDD" id="cd18110">
    <property type="entry name" value="ATP-synt_F1_beta_C"/>
    <property type="match status" value="1"/>
</dbReference>
<dbReference type="CDD" id="cd18115">
    <property type="entry name" value="ATP-synt_F1_beta_N"/>
    <property type="match status" value="1"/>
</dbReference>
<dbReference type="CDD" id="cd01133">
    <property type="entry name" value="F1-ATPase_beta_CD"/>
    <property type="match status" value="1"/>
</dbReference>
<dbReference type="FunFam" id="1.10.1140.10:FF:000001">
    <property type="entry name" value="ATP synthase subunit beta"/>
    <property type="match status" value="1"/>
</dbReference>
<dbReference type="FunFam" id="2.40.10.170:FF:000010">
    <property type="entry name" value="ATP synthase subunit beta"/>
    <property type="match status" value="1"/>
</dbReference>
<dbReference type="FunFam" id="3.40.50.300:FF:000004">
    <property type="entry name" value="ATP synthase subunit beta"/>
    <property type="match status" value="1"/>
</dbReference>
<dbReference type="Gene3D" id="2.40.10.170">
    <property type="match status" value="1"/>
</dbReference>
<dbReference type="Gene3D" id="1.10.1140.10">
    <property type="entry name" value="Bovine Mitochondrial F1-atpase, Atp Synthase Beta Chain, Chain D, domain 3"/>
    <property type="match status" value="1"/>
</dbReference>
<dbReference type="Gene3D" id="3.40.50.300">
    <property type="entry name" value="P-loop containing nucleotide triphosphate hydrolases"/>
    <property type="match status" value="1"/>
</dbReference>
<dbReference type="HAMAP" id="MF_01347">
    <property type="entry name" value="ATP_synth_beta_bact"/>
    <property type="match status" value="1"/>
</dbReference>
<dbReference type="InterPro" id="IPR003593">
    <property type="entry name" value="AAA+_ATPase"/>
</dbReference>
<dbReference type="InterPro" id="IPR055190">
    <property type="entry name" value="ATP-synt_VA_C"/>
</dbReference>
<dbReference type="InterPro" id="IPR005722">
    <property type="entry name" value="ATP_synth_F1_bsu"/>
</dbReference>
<dbReference type="InterPro" id="IPR020003">
    <property type="entry name" value="ATPase_a/bsu_AS"/>
</dbReference>
<dbReference type="InterPro" id="IPR050053">
    <property type="entry name" value="ATPase_alpha/beta_chains"/>
</dbReference>
<dbReference type="InterPro" id="IPR004100">
    <property type="entry name" value="ATPase_F1/V1/A1_a/bsu_N"/>
</dbReference>
<dbReference type="InterPro" id="IPR036121">
    <property type="entry name" value="ATPase_F1/V1/A1_a/bsu_N_sf"/>
</dbReference>
<dbReference type="InterPro" id="IPR000194">
    <property type="entry name" value="ATPase_F1/V1/A1_a/bsu_nucl-bd"/>
</dbReference>
<dbReference type="InterPro" id="IPR024034">
    <property type="entry name" value="ATPase_F1/V1_b/a_C"/>
</dbReference>
<dbReference type="InterPro" id="IPR027417">
    <property type="entry name" value="P-loop_NTPase"/>
</dbReference>
<dbReference type="NCBIfam" id="TIGR01039">
    <property type="entry name" value="atpD"/>
    <property type="match status" value="1"/>
</dbReference>
<dbReference type="PANTHER" id="PTHR15184">
    <property type="entry name" value="ATP SYNTHASE"/>
    <property type="match status" value="1"/>
</dbReference>
<dbReference type="PANTHER" id="PTHR15184:SF71">
    <property type="entry name" value="ATP SYNTHASE SUBUNIT BETA, MITOCHONDRIAL"/>
    <property type="match status" value="1"/>
</dbReference>
<dbReference type="Pfam" id="PF00006">
    <property type="entry name" value="ATP-synt_ab"/>
    <property type="match status" value="1"/>
</dbReference>
<dbReference type="Pfam" id="PF02874">
    <property type="entry name" value="ATP-synt_ab_N"/>
    <property type="match status" value="1"/>
</dbReference>
<dbReference type="Pfam" id="PF22919">
    <property type="entry name" value="ATP-synt_VA_C"/>
    <property type="match status" value="1"/>
</dbReference>
<dbReference type="SMART" id="SM00382">
    <property type="entry name" value="AAA"/>
    <property type="match status" value="1"/>
</dbReference>
<dbReference type="SUPFAM" id="SSF47917">
    <property type="entry name" value="C-terminal domain of alpha and beta subunits of F1 ATP synthase"/>
    <property type="match status" value="1"/>
</dbReference>
<dbReference type="SUPFAM" id="SSF50615">
    <property type="entry name" value="N-terminal domain of alpha and beta subunits of F1 ATP synthase"/>
    <property type="match status" value="1"/>
</dbReference>
<dbReference type="SUPFAM" id="SSF52540">
    <property type="entry name" value="P-loop containing nucleoside triphosphate hydrolases"/>
    <property type="match status" value="1"/>
</dbReference>
<dbReference type="PROSITE" id="PS00152">
    <property type="entry name" value="ATPASE_ALPHA_BETA"/>
    <property type="match status" value="1"/>
</dbReference>